<gene>
    <name evidence="1" type="primary">ispE</name>
    <name type="ordered locus">Minf_1286</name>
</gene>
<evidence type="ECO:0000255" key="1">
    <source>
        <dbReference type="HAMAP-Rule" id="MF_00061"/>
    </source>
</evidence>
<name>ISPE_METI4</name>
<reference key="1">
    <citation type="journal article" date="2008" name="Biol. Direct">
        <title>Complete genome sequence of the extremely acidophilic methanotroph isolate V4, Methylacidiphilum infernorum, a representative of the bacterial phylum Verrucomicrobia.</title>
        <authorList>
            <person name="Hou S."/>
            <person name="Makarova K.S."/>
            <person name="Saw J.H."/>
            <person name="Senin P."/>
            <person name="Ly B.V."/>
            <person name="Zhou Z."/>
            <person name="Ren Y."/>
            <person name="Wang J."/>
            <person name="Galperin M.Y."/>
            <person name="Omelchenko M.V."/>
            <person name="Wolf Y.I."/>
            <person name="Yutin N."/>
            <person name="Koonin E.V."/>
            <person name="Stott M.B."/>
            <person name="Mountain B.W."/>
            <person name="Crowe M.A."/>
            <person name="Smirnova A.V."/>
            <person name="Dunfield P.F."/>
            <person name="Feng L."/>
            <person name="Wang L."/>
            <person name="Alam M."/>
        </authorList>
    </citation>
    <scope>NUCLEOTIDE SEQUENCE [LARGE SCALE GENOMIC DNA]</scope>
    <source>
        <strain>Isolate V4</strain>
    </source>
</reference>
<keyword id="KW-0067">ATP-binding</keyword>
<keyword id="KW-0414">Isoprene biosynthesis</keyword>
<keyword id="KW-0418">Kinase</keyword>
<keyword id="KW-0547">Nucleotide-binding</keyword>
<keyword id="KW-0808">Transferase</keyword>
<accession>B3DVI7</accession>
<feature type="chain" id="PRO_1000092096" description="4-diphosphocytidyl-2-C-methyl-D-erythritol kinase">
    <location>
        <begin position="1"/>
        <end position="287"/>
    </location>
</feature>
<feature type="active site" evidence="1">
    <location>
        <position position="14"/>
    </location>
</feature>
<feature type="active site" evidence="1">
    <location>
        <position position="140"/>
    </location>
</feature>
<feature type="binding site" evidence="1">
    <location>
        <begin position="98"/>
        <end position="108"/>
    </location>
    <ligand>
        <name>ATP</name>
        <dbReference type="ChEBI" id="CHEBI:30616"/>
    </ligand>
</feature>
<protein>
    <recommendedName>
        <fullName evidence="1">4-diphosphocytidyl-2-C-methyl-D-erythritol kinase</fullName>
        <shortName evidence="1">CMK</shortName>
        <ecNumber evidence="1">2.7.1.148</ecNumber>
    </recommendedName>
    <alternativeName>
        <fullName evidence="1">4-(cytidine-5'-diphospho)-2-C-methyl-D-erythritol kinase</fullName>
    </alternativeName>
</protein>
<proteinExistence type="inferred from homology"/>
<dbReference type="EC" id="2.7.1.148" evidence="1"/>
<dbReference type="EMBL" id="CP000975">
    <property type="protein sequence ID" value="ACD83340.1"/>
    <property type="molecule type" value="Genomic_DNA"/>
</dbReference>
<dbReference type="RefSeq" id="WP_012463622.1">
    <property type="nucleotide sequence ID" value="NC_010794.1"/>
</dbReference>
<dbReference type="SMR" id="B3DVI7"/>
<dbReference type="STRING" id="481448.Minf_1286"/>
<dbReference type="KEGG" id="min:Minf_1286"/>
<dbReference type="eggNOG" id="COG1947">
    <property type="taxonomic scope" value="Bacteria"/>
</dbReference>
<dbReference type="HOGENOM" id="CLU_053057_1_1_0"/>
<dbReference type="OrthoDB" id="9809438at2"/>
<dbReference type="UniPathway" id="UPA00056">
    <property type="reaction ID" value="UER00094"/>
</dbReference>
<dbReference type="Proteomes" id="UP000009149">
    <property type="component" value="Chromosome"/>
</dbReference>
<dbReference type="GO" id="GO:0050515">
    <property type="term" value="F:4-(cytidine 5'-diphospho)-2-C-methyl-D-erythritol kinase activity"/>
    <property type="evidence" value="ECO:0007669"/>
    <property type="project" value="UniProtKB-UniRule"/>
</dbReference>
<dbReference type="GO" id="GO:0005524">
    <property type="term" value="F:ATP binding"/>
    <property type="evidence" value="ECO:0007669"/>
    <property type="project" value="UniProtKB-UniRule"/>
</dbReference>
<dbReference type="GO" id="GO:0019288">
    <property type="term" value="P:isopentenyl diphosphate biosynthetic process, methylerythritol 4-phosphate pathway"/>
    <property type="evidence" value="ECO:0007669"/>
    <property type="project" value="UniProtKB-UniRule"/>
</dbReference>
<dbReference type="GO" id="GO:0016114">
    <property type="term" value="P:terpenoid biosynthetic process"/>
    <property type="evidence" value="ECO:0007669"/>
    <property type="project" value="InterPro"/>
</dbReference>
<dbReference type="Gene3D" id="3.30.230.10">
    <property type="match status" value="1"/>
</dbReference>
<dbReference type="Gene3D" id="3.30.70.890">
    <property type="entry name" value="GHMP kinase, C-terminal domain"/>
    <property type="match status" value="1"/>
</dbReference>
<dbReference type="HAMAP" id="MF_00061">
    <property type="entry name" value="IspE"/>
    <property type="match status" value="1"/>
</dbReference>
<dbReference type="InterPro" id="IPR036554">
    <property type="entry name" value="GHMP_kinase_C_sf"/>
</dbReference>
<dbReference type="InterPro" id="IPR006204">
    <property type="entry name" value="GHMP_kinase_N_dom"/>
</dbReference>
<dbReference type="InterPro" id="IPR004424">
    <property type="entry name" value="IspE"/>
</dbReference>
<dbReference type="InterPro" id="IPR020568">
    <property type="entry name" value="Ribosomal_Su5_D2-typ_SF"/>
</dbReference>
<dbReference type="InterPro" id="IPR014721">
    <property type="entry name" value="Ribsml_uS5_D2-typ_fold_subgr"/>
</dbReference>
<dbReference type="NCBIfam" id="TIGR00154">
    <property type="entry name" value="ispE"/>
    <property type="match status" value="1"/>
</dbReference>
<dbReference type="PANTHER" id="PTHR43527">
    <property type="entry name" value="4-DIPHOSPHOCYTIDYL-2-C-METHYL-D-ERYTHRITOL KINASE, CHLOROPLASTIC"/>
    <property type="match status" value="1"/>
</dbReference>
<dbReference type="PANTHER" id="PTHR43527:SF2">
    <property type="entry name" value="4-DIPHOSPHOCYTIDYL-2-C-METHYL-D-ERYTHRITOL KINASE, CHLOROPLASTIC"/>
    <property type="match status" value="1"/>
</dbReference>
<dbReference type="Pfam" id="PF00288">
    <property type="entry name" value="GHMP_kinases_N"/>
    <property type="match status" value="1"/>
</dbReference>
<dbReference type="PIRSF" id="PIRSF010376">
    <property type="entry name" value="IspE"/>
    <property type="match status" value="1"/>
</dbReference>
<dbReference type="SUPFAM" id="SSF55060">
    <property type="entry name" value="GHMP Kinase, C-terminal domain"/>
    <property type="match status" value="1"/>
</dbReference>
<dbReference type="SUPFAM" id="SSF54211">
    <property type="entry name" value="Ribosomal protein S5 domain 2-like"/>
    <property type="match status" value="1"/>
</dbReference>
<sequence>MSTSNYINSFAPAKINLGLRIFGKRKDGYHELQTLMAPISIGDRIEITLLSSGIEFESTGDFDVPKDSSNLALKAALLFLSHHGLKTGLRIKLTKIVPPGAGLGGGSSDAAAVLFSLNRMLAIDETMENLIRLAAQLGSDVPFFLLRKPALCTGRGEILHPTSSFPYPRKGLLIYPGFPVSTPWAYKTYDELCKKGLILPSPSQESDKPVNDLEEAVFSKYLWLPAVKKWIQSHFNPEVCLMSGSGSSVFALFSKEDPRFFNDLIQQAQAYLGPGCWIRLFEILEQF</sequence>
<comment type="function">
    <text evidence="1">Catalyzes the phosphorylation of the position 2 hydroxy group of 4-diphosphocytidyl-2C-methyl-D-erythritol.</text>
</comment>
<comment type="catalytic activity">
    <reaction evidence="1">
        <text>4-CDP-2-C-methyl-D-erythritol + ATP = 4-CDP-2-C-methyl-D-erythritol 2-phosphate + ADP + H(+)</text>
        <dbReference type="Rhea" id="RHEA:18437"/>
        <dbReference type="ChEBI" id="CHEBI:15378"/>
        <dbReference type="ChEBI" id="CHEBI:30616"/>
        <dbReference type="ChEBI" id="CHEBI:57823"/>
        <dbReference type="ChEBI" id="CHEBI:57919"/>
        <dbReference type="ChEBI" id="CHEBI:456216"/>
        <dbReference type="EC" id="2.7.1.148"/>
    </reaction>
</comment>
<comment type="pathway">
    <text evidence="1">Isoprenoid biosynthesis; isopentenyl diphosphate biosynthesis via DXP pathway; isopentenyl diphosphate from 1-deoxy-D-xylulose 5-phosphate: step 3/6.</text>
</comment>
<comment type="similarity">
    <text evidence="1">Belongs to the GHMP kinase family. IspE subfamily.</text>
</comment>
<organism>
    <name type="scientific">Methylacidiphilum infernorum (isolate V4)</name>
    <name type="common">Methylokorus infernorum (strain V4)</name>
    <dbReference type="NCBI Taxonomy" id="481448"/>
    <lineage>
        <taxon>Bacteria</taxon>
        <taxon>Pseudomonadati</taxon>
        <taxon>Verrucomicrobiota</taxon>
        <taxon>Methylacidiphilae</taxon>
        <taxon>Methylacidiphilales</taxon>
        <taxon>Methylacidiphilaceae</taxon>
        <taxon>Methylacidiphilum (ex Ratnadevi et al. 2023)</taxon>
    </lineage>
</organism>